<dbReference type="EMBL" id="CP000477">
    <property type="protein sequence ID" value="ABK15452.1"/>
    <property type="molecule type" value="Genomic_DNA"/>
</dbReference>
<dbReference type="RefSeq" id="WP_011696830.1">
    <property type="nucleotide sequence ID" value="NC_008553.1"/>
</dbReference>
<dbReference type="SMR" id="A0B9S8"/>
<dbReference type="STRING" id="349307.Mthe_1686"/>
<dbReference type="GeneID" id="4463438"/>
<dbReference type="KEGG" id="mtp:Mthe_1686"/>
<dbReference type="HOGENOM" id="CLU_102600_3_0_2"/>
<dbReference type="OrthoDB" id="23689at2157"/>
<dbReference type="Proteomes" id="UP000000674">
    <property type="component" value="Chromosome"/>
</dbReference>
<dbReference type="GO" id="GO:0005737">
    <property type="term" value="C:cytoplasm"/>
    <property type="evidence" value="ECO:0007669"/>
    <property type="project" value="UniProtKB-SubCell"/>
</dbReference>
<dbReference type="GO" id="GO:0043022">
    <property type="term" value="F:ribosome binding"/>
    <property type="evidence" value="ECO:0007669"/>
    <property type="project" value="InterPro"/>
</dbReference>
<dbReference type="GO" id="GO:0003723">
    <property type="term" value="F:RNA binding"/>
    <property type="evidence" value="ECO:0007669"/>
    <property type="project" value="InterPro"/>
</dbReference>
<dbReference type="GO" id="GO:0003746">
    <property type="term" value="F:translation elongation factor activity"/>
    <property type="evidence" value="ECO:0007669"/>
    <property type="project" value="InterPro"/>
</dbReference>
<dbReference type="GO" id="GO:0003743">
    <property type="term" value="F:translation initiation factor activity"/>
    <property type="evidence" value="ECO:0007669"/>
    <property type="project" value="UniProtKB-UniRule"/>
</dbReference>
<dbReference type="GO" id="GO:0045901">
    <property type="term" value="P:positive regulation of translational elongation"/>
    <property type="evidence" value="ECO:0007669"/>
    <property type="project" value="InterPro"/>
</dbReference>
<dbReference type="GO" id="GO:0045905">
    <property type="term" value="P:positive regulation of translational termination"/>
    <property type="evidence" value="ECO:0007669"/>
    <property type="project" value="InterPro"/>
</dbReference>
<dbReference type="CDD" id="cd04467">
    <property type="entry name" value="S1_aIF5A"/>
    <property type="match status" value="1"/>
</dbReference>
<dbReference type="FunFam" id="2.30.30.30:FF:000038">
    <property type="entry name" value="Translation initiation factor 5A"/>
    <property type="match status" value="1"/>
</dbReference>
<dbReference type="Gene3D" id="2.30.30.30">
    <property type="match status" value="1"/>
</dbReference>
<dbReference type="Gene3D" id="2.40.50.140">
    <property type="entry name" value="Nucleic acid-binding proteins"/>
    <property type="match status" value="1"/>
</dbReference>
<dbReference type="HAMAP" id="MF_00085">
    <property type="entry name" value="eIF_5A"/>
    <property type="match status" value="1"/>
</dbReference>
<dbReference type="InterPro" id="IPR001884">
    <property type="entry name" value="IF5A-like"/>
</dbReference>
<dbReference type="InterPro" id="IPR048670">
    <property type="entry name" value="IF5A-like_N"/>
</dbReference>
<dbReference type="InterPro" id="IPR012340">
    <property type="entry name" value="NA-bd_OB-fold"/>
</dbReference>
<dbReference type="InterPro" id="IPR014722">
    <property type="entry name" value="Rib_uL2_dom2"/>
</dbReference>
<dbReference type="InterPro" id="IPR019769">
    <property type="entry name" value="Trans_elong_IF5A_hypusine_site"/>
</dbReference>
<dbReference type="InterPro" id="IPR022847">
    <property type="entry name" value="Transl_elong_IF5A_arc"/>
</dbReference>
<dbReference type="InterPro" id="IPR020189">
    <property type="entry name" value="Transl_elong_IF5A_C"/>
</dbReference>
<dbReference type="InterPro" id="IPR008991">
    <property type="entry name" value="Translation_prot_SH3-like_sf"/>
</dbReference>
<dbReference type="NCBIfam" id="TIGR00037">
    <property type="entry name" value="eIF_5A"/>
    <property type="match status" value="1"/>
</dbReference>
<dbReference type="NCBIfam" id="NF003076">
    <property type="entry name" value="PRK03999.1"/>
    <property type="match status" value="1"/>
</dbReference>
<dbReference type="PANTHER" id="PTHR11673">
    <property type="entry name" value="TRANSLATION INITIATION FACTOR 5A FAMILY MEMBER"/>
    <property type="match status" value="1"/>
</dbReference>
<dbReference type="Pfam" id="PF01287">
    <property type="entry name" value="eIF-5a"/>
    <property type="match status" value="1"/>
</dbReference>
<dbReference type="Pfam" id="PF21485">
    <property type="entry name" value="IF5A-like_N"/>
    <property type="match status" value="1"/>
</dbReference>
<dbReference type="PIRSF" id="PIRSF003025">
    <property type="entry name" value="eIF5A"/>
    <property type="match status" value="1"/>
</dbReference>
<dbReference type="SMART" id="SM01376">
    <property type="entry name" value="eIF-5a"/>
    <property type="match status" value="1"/>
</dbReference>
<dbReference type="SUPFAM" id="SSF50249">
    <property type="entry name" value="Nucleic acid-binding proteins"/>
    <property type="match status" value="1"/>
</dbReference>
<dbReference type="SUPFAM" id="SSF50104">
    <property type="entry name" value="Translation proteins SH3-like domain"/>
    <property type="match status" value="1"/>
</dbReference>
<dbReference type="PROSITE" id="PS00302">
    <property type="entry name" value="IF5A_HYPUSINE"/>
    <property type="match status" value="1"/>
</dbReference>
<comment type="function">
    <text evidence="1">Functions by promoting the formation of the first peptide bond.</text>
</comment>
<comment type="subcellular location">
    <subcellularLocation>
        <location evidence="1">Cytoplasm</location>
    </subcellularLocation>
</comment>
<comment type="similarity">
    <text evidence="1">Belongs to the eIF-5A family.</text>
</comment>
<protein>
    <recommendedName>
        <fullName evidence="1">Translation initiation factor 5A</fullName>
    </recommendedName>
    <alternativeName>
        <fullName evidence="1">Hypusine-containing protein</fullName>
    </alternativeName>
    <alternativeName>
        <fullName evidence="1">eIF-5A</fullName>
    </alternativeName>
</protein>
<organism>
    <name type="scientific">Methanothrix thermoacetophila (strain DSM 6194 / JCM 14653 / NBRC 101360 / PT)</name>
    <name type="common">Methanosaeta thermophila</name>
    <dbReference type="NCBI Taxonomy" id="349307"/>
    <lineage>
        <taxon>Archaea</taxon>
        <taxon>Methanobacteriati</taxon>
        <taxon>Methanobacteriota</taxon>
        <taxon>Stenosarchaea group</taxon>
        <taxon>Methanomicrobia</taxon>
        <taxon>Methanotrichales</taxon>
        <taxon>Methanotrichaceae</taxon>
        <taxon>Methanothrix</taxon>
    </lineage>
</organism>
<gene>
    <name type="primary">eIF5A</name>
    <name type="ordered locus">Mthe_1686</name>
</gene>
<proteinExistence type="inferred from homology"/>
<evidence type="ECO:0000255" key="1">
    <source>
        <dbReference type="HAMAP-Rule" id="MF_00085"/>
    </source>
</evidence>
<keyword id="KW-0963">Cytoplasm</keyword>
<keyword id="KW-0385">Hypusine</keyword>
<keyword id="KW-0396">Initiation factor</keyword>
<keyword id="KW-0648">Protein biosynthesis</keyword>
<keyword id="KW-1185">Reference proteome</keyword>
<reference key="1">
    <citation type="submission" date="2006-10" db="EMBL/GenBank/DDBJ databases">
        <title>Complete sequence of Methanosaeta thermophila PT.</title>
        <authorList>
            <consortium name="US DOE Joint Genome Institute"/>
            <person name="Copeland A."/>
            <person name="Lucas S."/>
            <person name="Lapidus A."/>
            <person name="Barry K."/>
            <person name="Detter J.C."/>
            <person name="Glavina del Rio T."/>
            <person name="Hammon N."/>
            <person name="Israni S."/>
            <person name="Pitluck S."/>
            <person name="Chain P."/>
            <person name="Malfatti S."/>
            <person name="Shin M."/>
            <person name="Vergez L."/>
            <person name="Schmutz J."/>
            <person name="Larimer F."/>
            <person name="Land M."/>
            <person name="Hauser L."/>
            <person name="Kyrpides N."/>
            <person name="Kim E."/>
            <person name="Smith K.S."/>
            <person name="Ingram-Smith C."/>
            <person name="Richardson P."/>
        </authorList>
    </citation>
    <scope>NUCLEOTIDE SEQUENCE [LARGE SCALE GENOMIC DNA]</scope>
    <source>
        <strain>DSM 6194 / JCM 14653 / NBRC 101360 / PT</strain>
    </source>
</reference>
<name>IF5A_METTP</name>
<sequence length="127" mass="14126">MKEQVEIRTLKEGRYIIIDDEPCIIKSIAHSKPGKHGAAKARIDAIGIFDNQKRSIVAPVTTKVYAPIVERKTGQVLSVGETSVQLMDLKDYTTIDVPITEDMKPKLEPGKEVAYLSSMGKVKMDIR</sequence>
<feature type="chain" id="PRO_1000007914" description="Translation initiation factor 5A">
    <location>
        <begin position="1"/>
        <end position="127"/>
    </location>
</feature>
<feature type="modified residue" description="Hypusine" evidence="1">
    <location>
        <position position="35"/>
    </location>
</feature>
<accession>A0B9S8</accession>